<organism>
    <name type="scientific">Trichophyton verrucosum (strain HKI 0517)</name>
    <dbReference type="NCBI Taxonomy" id="663202"/>
    <lineage>
        <taxon>Eukaryota</taxon>
        <taxon>Fungi</taxon>
        <taxon>Dikarya</taxon>
        <taxon>Ascomycota</taxon>
        <taxon>Pezizomycotina</taxon>
        <taxon>Eurotiomycetes</taxon>
        <taxon>Eurotiomycetidae</taxon>
        <taxon>Onygenales</taxon>
        <taxon>Arthrodermataceae</taxon>
        <taxon>Trichophyton</taxon>
    </lineage>
</organism>
<comment type="cofactor">
    <cofactor evidence="1">
        <name>Zn(2+)</name>
        <dbReference type="ChEBI" id="CHEBI:29105"/>
    </cofactor>
    <text evidence="1">Binds 2 Zn(2+) ions per subunit.</text>
</comment>
<comment type="subcellular location">
    <subcellularLocation>
        <location evidence="4">Secreted</location>
    </subcellularLocation>
</comment>
<comment type="similarity">
    <text evidence="4">Belongs to the peptidase M28 family. M28B subfamily.</text>
</comment>
<reference key="1">
    <citation type="journal article" date="2011" name="Genome Biol.">
        <title>Comparative and functional genomics provide insights into the pathogenicity of dermatophytic fungi.</title>
        <authorList>
            <person name="Burmester A."/>
            <person name="Shelest E."/>
            <person name="Gloeckner G."/>
            <person name="Heddergott C."/>
            <person name="Schindler S."/>
            <person name="Staib P."/>
            <person name="Heidel A."/>
            <person name="Felder M."/>
            <person name="Petzold A."/>
            <person name="Szafranski K."/>
            <person name="Feuermann M."/>
            <person name="Pedruzzi I."/>
            <person name="Priebe S."/>
            <person name="Groth M."/>
            <person name="Winkler R."/>
            <person name="Li W."/>
            <person name="Kniemeyer O."/>
            <person name="Schroeckh V."/>
            <person name="Hertweck C."/>
            <person name="Hube B."/>
            <person name="White T.C."/>
            <person name="Platzer M."/>
            <person name="Guthke R."/>
            <person name="Heitman J."/>
            <person name="Woestemeyer J."/>
            <person name="Zipfel P.F."/>
            <person name="Monod M."/>
            <person name="Brakhage A.A."/>
        </authorList>
    </citation>
    <scope>NUCLEOTIDE SEQUENCE [LARGE SCALE GENOMIC DNA]</scope>
    <source>
        <strain>HKI 0517</strain>
    </source>
</reference>
<proteinExistence type="inferred from homology"/>
<feature type="signal peptide" evidence="2">
    <location>
        <begin position="1"/>
        <end position="24"/>
    </location>
</feature>
<feature type="chain" id="PRO_0000411763" description="Probable zinc metalloprotease TRV_03476">
    <location>
        <begin position="25"/>
        <end position="497"/>
    </location>
</feature>
<feature type="domain" description="Fibronectin type-III" evidence="3">
    <location>
        <begin position="411"/>
        <end position="497"/>
    </location>
</feature>
<feature type="binding site" evidence="1">
    <location>
        <position position="171"/>
    </location>
    <ligand>
        <name>Zn(2+)</name>
        <dbReference type="ChEBI" id="CHEBI:29105"/>
        <label>1</label>
    </ligand>
</feature>
<feature type="binding site" evidence="1">
    <location>
        <position position="191"/>
    </location>
    <ligand>
        <name>Zn(2+)</name>
        <dbReference type="ChEBI" id="CHEBI:29105"/>
        <label>1</label>
    </ligand>
</feature>
<feature type="binding site" evidence="1">
    <location>
        <position position="191"/>
    </location>
    <ligand>
        <name>Zn(2+)</name>
        <dbReference type="ChEBI" id="CHEBI:29105"/>
        <label>2</label>
        <note>catalytic</note>
    </ligand>
</feature>
<feature type="binding site" evidence="1">
    <location>
        <position position="227"/>
    </location>
    <ligand>
        <name>Zn(2+)</name>
        <dbReference type="ChEBI" id="CHEBI:29105"/>
        <label>2</label>
        <note>catalytic</note>
    </ligand>
</feature>
<feature type="binding site" evidence="1">
    <location>
        <position position="254"/>
    </location>
    <ligand>
        <name>Zn(2+)</name>
        <dbReference type="ChEBI" id="CHEBI:29105"/>
        <label>1</label>
    </ligand>
</feature>
<feature type="glycosylation site" description="N-linked (GlcNAc...) asparagine" evidence="2">
    <location>
        <position position="100"/>
    </location>
</feature>
<feature type="glycosylation site" description="N-linked (GlcNAc...) asparagine" evidence="2">
    <location>
        <position position="121"/>
    </location>
</feature>
<feature type="glycosylation site" description="N-linked (GlcNAc...) asparagine" evidence="2">
    <location>
        <position position="242"/>
    </location>
</feature>
<feature type="glycosylation site" description="N-linked (GlcNAc...) asparagine" evidence="2">
    <location>
        <position position="424"/>
    </location>
</feature>
<accession>D4D8N9</accession>
<name>M28P2_TRIVH</name>
<gene>
    <name type="ORF">TRV_03476</name>
</gene>
<keyword id="KW-0325">Glycoprotein</keyword>
<keyword id="KW-0378">Hydrolase</keyword>
<keyword id="KW-0479">Metal-binding</keyword>
<keyword id="KW-0482">Metalloprotease</keyword>
<keyword id="KW-0645">Protease</keyword>
<keyword id="KW-0964">Secreted</keyword>
<keyword id="KW-0732">Signal</keyword>
<keyword id="KW-0862">Zinc</keyword>
<sequence length="497" mass="54890">MRFLISSLLSGLALLTSLHAFVLALPREYTIAMSNPFHESLFSCPAASWPRVKLGSENTPQEPSKDLRKILSQISPKRIEATIRKLVSFGTRHTLSTQTNATYGIGAARDWIESEFQRYANASDGRLTVKVVGYDQQPDGNRIPFPVRISDVVATLKGEGDPERVYVVSGHYDSRNSDPLDYKGIAPGANDDASGVAVSLELARVMSQRDLPRPKATIVFAAVAGEEQGLYGANFLAQSFRNSSTNVEGMFTNDIIGSSTADDGTKEPHVIRLFAQGIPPLNVENQAMRERRIMIGGDNDTPARQLARFVKETAENKHTDMEVSVIYRLDRYLRGGDHRPFLEAGYPAARFTEPNENYAHQHQDIRIDKDPKTGKDIQYGDLPEFCDFDFISRVGKVNAAALWNLAMSPGMPRNVRVNTNALSNDSKFSWDPPAGGNALVGGYEIVWRSTTAPFWTHKMDVGMVQEATIDLSKDNVIFGIRARGKNGERGVAVLPFP</sequence>
<protein>
    <recommendedName>
        <fullName>Probable zinc metalloprotease TRV_03476</fullName>
        <ecNumber>3.4.-.-</ecNumber>
    </recommendedName>
</protein>
<evidence type="ECO:0000250" key="1"/>
<evidence type="ECO:0000255" key="2"/>
<evidence type="ECO:0000255" key="3">
    <source>
        <dbReference type="PROSITE-ProRule" id="PRU00316"/>
    </source>
</evidence>
<evidence type="ECO:0000305" key="4"/>
<dbReference type="EC" id="3.4.-.-"/>
<dbReference type="EMBL" id="ACYE01000180">
    <property type="protein sequence ID" value="EFE41794.1"/>
    <property type="molecule type" value="Genomic_DNA"/>
</dbReference>
<dbReference type="RefSeq" id="XP_003022412.1">
    <property type="nucleotide sequence ID" value="XM_003022366.1"/>
</dbReference>
<dbReference type="SMR" id="D4D8N9"/>
<dbReference type="GeneID" id="9580959"/>
<dbReference type="KEGG" id="tve:TRV_03476"/>
<dbReference type="HOGENOM" id="CLU_047420_0_0_1"/>
<dbReference type="OrthoDB" id="2879at34384"/>
<dbReference type="Proteomes" id="UP000008383">
    <property type="component" value="Unassembled WGS sequence"/>
</dbReference>
<dbReference type="GO" id="GO:0005576">
    <property type="term" value="C:extracellular region"/>
    <property type="evidence" value="ECO:0007669"/>
    <property type="project" value="UniProtKB-SubCell"/>
</dbReference>
<dbReference type="GO" id="GO:0046872">
    <property type="term" value="F:metal ion binding"/>
    <property type="evidence" value="ECO:0007669"/>
    <property type="project" value="UniProtKB-KW"/>
</dbReference>
<dbReference type="GO" id="GO:0008235">
    <property type="term" value="F:metalloexopeptidase activity"/>
    <property type="evidence" value="ECO:0007669"/>
    <property type="project" value="InterPro"/>
</dbReference>
<dbReference type="GO" id="GO:0006508">
    <property type="term" value="P:proteolysis"/>
    <property type="evidence" value="ECO:0007669"/>
    <property type="project" value="UniProtKB-KW"/>
</dbReference>
<dbReference type="CDD" id="cd00063">
    <property type="entry name" value="FN3"/>
    <property type="match status" value="1"/>
</dbReference>
<dbReference type="CDD" id="cd05642">
    <property type="entry name" value="M28_like"/>
    <property type="match status" value="1"/>
</dbReference>
<dbReference type="Gene3D" id="3.40.630.10">
    <property type="entry name" value="Zn peptidases"/>
    <property type="match status" value="1"/>
</dbReference>
<dbReference type="InterPro" id="IPR003961">
    <property type="entry name" value="FN3_dom"/>
</dbReference>
<dbReference type="InterPro" id="IPR036116">
    <property type="entry name" value="FN3_sf"/>
</dbReference>
<dbReference type="InterPro" id="IPR045175">
    <property type="entry name" value="M28_fam"/>
</dbReference>
<dbReference type="InterPro" id="IPR007484">
    <property type="entry name" value="Peptidase_M28"/>
</dbReference>
<dbReference type="PANTHER" id="PTHR12147">
    <property type="entry name" value="METALLOPEPTIDASE M28 FAMILY MEMBER"/>
    <property type="match status" value="1"/>
</dbReference>
<dbReference type="PANTHER" id="PTHR12147:SF26">
    <property type="entry name" value="PEPTIDASE M28 DOMAIN-CONTAINING PROTEIN"/>
    <property type="match status" value="1"/>
</dbReference>
<dbReference type="Pfam" id="PF04389">
    <property type="entry name" value="Peptidase_M28"/>
    <property type="match status" value="1"/>
</dbReference>
<dbReference type="SUPFAM" id="SSF49265">
    <property type="entry name" value="Fibronectin type III"/>
    <property type="match status" value="1"/>
</dbReference>
<dbReference type="SUPFAM" id="SSF53187">
    <property type="entry name" value="Zn-dependent exopeptidases"/>
    <property type="match status" value="1"/>
</dbReference>
<dbReference type="PROSITE" id="PS50853">
    <property type="entry name" value="FN3"/>
    <property type="match status" value="1"/>
</dbReference>